<protein>
    <recommendedName>
        <fullName>Caerin-1.7</fullName>
    </recommendedName>
    <component>
        <recommendedName>
            <fullName>Caerin-1.7.1</fullName>
        </recommendedName>
    </component>
</protein>
<proteinExistence type="evidence at protein level"/>
<evidence type="ECO:0000250" key="1"/>
<evidence type="ECO:0000269" key="2">
    <source>
    </source>
</evidence>
<evidence type="ECO:0000269" key="3">
    <source>
    </source>
</evidence>
<evidence type="ECO:0000305" key="4"/>
<dbReference type="SMR" id="P62548"/>
<dbReference type="GO" id="GO:0005576">
    <property type="term" value="C:extracellular region"/>
    <property type="evidence" value="ECO:0007669"/>
    <property type="project" value="UniProtKB-SubCell"/>
</dbReference>
<dbReference type="GO" id="GO:0042742">
    <property type="term" value="P:defense response to bacterium"/>
    <property type="evidence" value="ECO:0007669"/>
    <property type="project" value="UniProtKB-KW"/>
</dbReference>
<dbReference type="InterPro" id="IPR010000">
    <property type="entry name" value="Caerin_1"/>
</dbReference>
<dbReference type="Pfam" id="PF07440">
    <property type="entry name" value="Caerin_1"/>
    <property type="match status" value="1"/>
</dbReference>
<keyword id="KW-0027">Amidation</keyword>
<keyword id="KW-0878">Amphibian defense peptide</keyword>
<keyword id="KW-0044">Antibiotic</keyword>
<keyword id="KW-0929">Antimicrobial</keyword>
<keyword id="KW-0903">Direct protein sequencing</keyword>
<keyword id="KW-0964">Secreted</keyword>
<organism>
    <name type="scientific">Ranoidea xanthomera</name>
    <name type="common">Northern orange-eyed tree frog</name>
    <name type="synonym">Litoria xanthomera</name>
    <dbReference type="NCBI Taxonomy" id="79697"/>
    <lineage>
        <taxon>Eukaryota</taxon>
        <taxon>Metazoa</taxon>
        <taxon>Chordata</taxon>
        <taxon>Craniata</taxon>
        <taxon>Vertebrata</taxon>
        <taxon>Euteleostomi</taxon>
        <taxon>Amphibia</taxon>
        <taxon>Batrachia</taxon>
        <taxon>Anura</taxon>
        <taxon>Neobatrachia</taxon>
        <taxon>Hyloidea</taxon>
        <taxon>Hylidae</taxon>
        <taxon>Pelodryadinae</taxon>
        <taxon>Litoria</taxon>
    </lineage>
</organism>
<comment type="function">
    <text>Antibacterial peptide, that adopts an alpha helical conformation which can disrupt bacterial membranes. Each caerin displays a different antimicrobial specificity.</text>
</comment>
<comment type="subcellular location">
    <subcellularLocation>
        <location>Secreted</location>
    </subcellularLocation>
</comment>
<comment type="tissue specificity">
    <text>Expressed by the skin dorsal glands.</text>
</comment>
<comment type="domain">
    <text evidence="1">Contains two amphipathic alpha helix regions separated by a region of less-defined helicity and greater flexibility.</text>
</comment>
<comment type="PTM">
    <text>Caerin-1.7.1 does not have any antibacterial activity.</text>
</comment>
<comment type="mass spectrometry" mass="2634.0" method="FAB" evidence="2 3">
    <molecule>Caerin-1.7</molecule>
</comment>
<comment type="mass spectrometry" mass="2464.0" method="FAB" evidence="2 3">
    <molecule>Caerin-1.7.1</molecule>
</comment>
<comment type="similarity">
    <text evidence="4">Belongs to the frog skin active peptide (FSAP) family. Caerin subfamily.</text>
</comment>
<feature type="peptide" id="PRO_0000010184" description="Caerin-1.7">
    <location>
        <begin position="1"/>
        <end position="25"/>
    </location>
</feature>
<feature type="peptide" id="PRO_0000010185" description="Caerin-1.7.1">
    <location>
        <begin position="3"/>
        <end position="25"/>
    </location>
</feature>
<feature type="modified residue" description="Leucine amide" evidence="2 3">
    <location>
        <position position="25"/>
    </location>
</feature>
<sequence length="25" mass="2637">GLFKVLGSVAKHLLPHVAPVIAEKL</sequence>
<accession>P62548</accession>
<accession>P56232</accession>
<accession>P81250</accession>
<reference key="1">
    <citation type="journal article" date="1997" name="J. Pept. Sci.">
        <title>New caerin antibacterial peptides from the skin glands of the Australian tree frog Litoria xanthomera.</title>
        <authorList>
            <person name="Steinborner S.T."/>
            <person name="Waugh R.J."/>
            <person name="Bowie J.H."/>
            <person name="Wallace J.C."/>
            <person name="Tyler M.J."/>
            <person name="Ramsay S.L."/>
        </authorList>
    </citation>
    <scope>PROTEIN SEQUENCE</scope>
    <scope>AMIDATION AT LEU-25</scope>
    <scope>MASS SPECTROMETRY OF 1.7 AND 1.7.1</scope>
    <source>
        <tissue>Skin secretion</tissue>
    </source>
</reference>
<reference key="2">
    <citation type="journal article" date="1997" name="Rapid Commun. Mass Spectrom.">
        <title>New caerin antibacterial peptides from the skin glands of the Australian tree frog Litoria xanthomera. Part 2. Sequence determination using mass spectrometry and associated techniques.</title>
        <authorList>
            <person name="Steinborner S.T."/>
            <person name="Waugh R.J."/>
            <person name="Bowie J.H."/>
            <person name="Tyler M.J."/>
        </authorList>
    </citation>
    <scope>MASS SPECTROMETRY OF 1.7 AND 1.7.1</scope>
    <scope>AMIDATION AT LEU-25</scope>
    <source>
        <tissue>Skin secretion</tissue>
    </source>
</reference>
<name>CR17_RANXA</name>